<gene>
    <name evidence="1" type="primary">aroC</name>
    <name type="ordered locus">ROP_69210</name>
</gene>
<organism>
    <name type="scientific">Rhodococcus opacus (strain B4)</name>
    <dbReference type="NCBI Taxonomy" id="632772"/>
    <lineage>
        <taxon>Bacteria</taxon>
        <taxon>Bacillati</taxon>
        <taxon>Actinomycetota</taxon>
        <taxon>Actinomycetes</taxon>
        <taxon>Mycobacteriales</taxon>
        <taxon>Nocardiaceae</taxon>
        <taxon>Rhodococcus</taxon>
    </lineage>
</organism>
<reference key="1">
    <citation type="submission" date="2009-03" db="EMBL/GenBank/DDBJ databases">
        <title>Comparison of the complete genome sequences of Rhodococcus erythropolis PR4 and Rhodococcus opacus B4.</title>
        <authorList>
            <person name="Takarada H."/>
            <person name="Sekine M."/>
            <person name="Hosoyama A."/>
            <person name="Yamada R."/>
            <person name="Fujisawa T."/>
            <person name="Omata S."/>
            <person name="Shimizu A."/>
            <person name="Tsukatani N."/>
            <person name="Tanikawa S."/>
            <person name="Fujita N."/>
            <person name="Harayama S."/>
        </authorList>
    </citation>
    <scope>NUCLEOTIDE SEQUENCE [LARGE SCALE GENOMIC DNA]</scope>
    <source>
        <strain>B4</strain>
    </source>
</reference>
<name>AROC_RHOOB</name>
<protein>
    <recommendedName>
        <fullName evidence="1">Chorismate synthase</fullName>
        <shortName evidence="1">CS</shortName>
        <ecNumber evidence="1">4.2.3.5</ecNumber>
    </recommendedName>
    <alternativeName>
        <fullName evidence="1">5-enolpyruvylshikimate-3-phosphate phospholyase</fullName>
    </alternativeName>
</protein>
<keyword id="KW-0028">Amino-acid biosynthesis</keyword>
<keyword id="KW-0057">Aromatic amino acid biosynthesis</keyword>
<keyword id="KW-0274">FAD</keyword>
<keyword id="KW-0285">Flavoprotein</keyword>
<keyword id="KW-0288">FMN</keyword>
<keyword id="KW-0456">Lyase</keyword>
<keyword id="KW-0521">NADP</keyword>
<comment type="function">
    <text evidence="1">Catalyzes the anti-1,4-elimination of the C-3 phosphate and the C-6 proR hydrogen from 5-enolpyruvylshikimate-3-phosphate (EPSP) to yield chorismate, which is the branch point compound that serves as the starting substrate for the three terminal pathways of aromatic amino acid biosynthesis. This reaction introduces a second double bond into the aromatic ring system.</text>
</comment>
<comment type="catalytic activity">
    <reaction evidence="1">
        <text>5-O-(1-carboxyvinyl)-3-phosphoshikimate = chorismate + phosphate</text>
        <dbReference type="Rhea" id="RHEA:21020"/>
        <dbReference type="ChEBI" id="CHEBI:29748"/>
        <dbReference type="ChEBI" id="CHEBI:43474"/>
        <dbReference type="ChEBI" id="CHEBI:57701"/>
        <dbReference type="EC" id="4.2.3.5"/>
    </reaction>
</comment>
<comment type="cofactor">
    <cofactor evidence="1">
        <name>FMNH2</name>
        <dbReference type="ChEBI" id="CHEBI:57618"/>
    </cofactor>
    <text evidence="1">Reduced FMN (FMNH(2)).</text>
</comment>
<comment type="pathway">
    <text evidence="1">Metabolic intermediate biosynthesis; chorismate biosynthesis; chorismate from D-erythrose 4-phosphate and phosphoenolpyruvate: step 7/7.</text>
</comment>
<comment type="subunit">
    <text evidence="1">Homotetramer.</text>
</comment>
<comment type="similarity">
    <text evidence="1">Belongs to the chorismate synthase family.</text>
</comment>
<evidence type="ECO:0000255" key="1">
    <source>
        <dbReference type="HAMAP-Rule" id="MF_00300"/>
    </source>
</evidence>
<evidence type="ECO:0000256" key="2">
    <source>
        <dbReference type="SAM" id="MobiDB-lite"/>
    </source>
</evidence>
<feature type="chain" id="PRO_1000132784" description="Chorismate synthase">
    <location>
        <begin position="1"/>
        <end position="395"/>
    </location>
</feature>
<feature type="region of interest" description="Disordered" evidence="2">
    <location>
        <begin position="272"/>
        <end position="296"/>
    </location>
</feature>
<feature type="compositionally biased region" description="Basic and acidic residues" evidence="2">
    <location>
        <begin position="272"/>
        <end position="283"/>
    </location>
</feature>
<feature type="binding site" evidence="1">
    <location>
        <position position="40"/>
    </location>
    <ligand>
        <name>NADP(+)</name>
        <dbReference type="ChEBI" id="CHEBI:58349"/>
    </ligand>
</feature>
<feature type="binding site" evidence="1">
    <location>
        <position position="46"/>
    </location>
    <ligand>
        <name>NADP(+)</name>
        <dbReference type="ChEBI" id="CHEBI:58349"/>
    </ligand>
</feature>
<feature type="binding site" evidence="1">
    <location>
        <begin position="135"/>
        <end position="137"/>
    </location>
    <ligand>
        <name>FMN</name>
        <dbReference type="ChEBI" id="CHEBI:58210"/>
    </ligand>
</feature>
<feature type="binding site" evidence="1">
    <location>
        <begin position="256"/>
        <end position="257"/>
    </location>
    <ligand>
        <name>FMN</name>
        <dbReference type="ChEBI" id="CHEBI:58210"/>
    </ligand>
</feature>
<feature type="binding site" evidence="1">
    <location>
        <position position="300"/>
    </location>
    <ligand>
        <name>FMN</name>
        <dbReference type="ChEBI" id="CHEBI:58210"/>
    </ligand>
</feature>
<feature type="binding site" evidence="1">
    <location>
        <begin position="315"/>
        <end position="319"/>
    </location>
    <ligand>
        <name>FMN</name>
        <dbReference type="ChEBI" id="CHEBI:58210"/>
    </ligand>
</feature>
<feature type="binding site" evidence="1">
    <location>
        <position position="341"/>
    </location>
    <ligand>
        <name>FMN</name>
        <dbReference type="ChEBI" id="CHEBI:58210"/>
    </ligand>
</feature>
<proteinExistence type="inferred from homology"/>
<accession>C1B4H9</accession>
<dbReference type="EC" id="4.2.3.5" evidence="1"/>
<dbReference type="EMBL" id="AP011115">
    <property type="protein sequence ID" value="BAH55168.1"/>
    <property type="molecule type" value="Genomic_DNA"/>
</dbReference>
<dbReference type="RefSeq" id="WP_015890598.1">
    <property type="nucleotide sequence ID" value="NC_012522.1"/>
</dbReference>
<dbReference type="SMR" id="C1B4H9"/>
<dbReference type="STRING" id="632772.ROP_69210"/>
<dbReference type="KEGG" id="rop:ROP_69210"/>
<dbReference type="PATRIC" id="fig|632772.20.peg.7212"/>
<dbReference type="HOGENOM" id="CLU_034547_2_0_11"/>
<dbReference type="OrthoDB" id="9771806at2"/>
<dbReference type="UniPathway" id="UPA00053">
    <property type="reaction ID" value="UER00090"/>
</dbReference>
<dbReference type="Proteomes" id="UP000002212">
    <property type="component" value="Chromosome"/>
</dbReference>
<dbReference type="GO" id="GO:0005829">
    <property type="term" value="C:cytosol"/>
    <property type="evidence" value="ECO:0007669"/>
    <property type="project" value="TreeGrafter"/>
</dbReference>
<dbReference type="GO" id="GO:0004107">
    <property type="term" value="F:chorismate synthase activity"/>
    <property type="evidence" value="ECO:0007669"/>
    <property type="project" value="UniProtKB-UniRule"/>
</dbReference>
<dbReference type="GO" id="GO:0010181">
    <property type="term" value="F:FMN binding"/>
    <property type="evidence" value="ECO:0007669"/>
    <property type="project" value="TreeGrafter"/>
</dbReference>
<dbReference type="GO" id="GO:0008652">
    <property type="term" value="P:amino acid biosynthetic process"/>
    <property type="evidence" value="ECO:0007669"/>
    <property type="project" value="UniProtKB-KW"/>
</dbReference>
<dbReference type="GO" id="GO:0009073">
    <property type="term" value="P:aromatic amino acid family biosynthetic process"/>
    <property type="evidence" value="ECO:0007669"/>
    <property type="project" value="UniProtKB-KW"/>
</dbReference>
<dbReference type="GO" id="GO:0009423">
    <property type="term" value="P:chorismate biosynthetic process"/>
    <property type="evidence" value="ECO:0007669"/>
    <property type="project" value="UniProtKB-UniRule"/>
</dbReference>
<dbReference type="CDD" id="cd07304">
    <property type="entry name" value="Chorismate_synthase"/>
    <property type="match status" value="1"/>
</dbReference>
<dbReference type="FunFam" id="3.60.150.10:FF:000002">
    <property type="entry name" value="Chorismate synthase"/>
    <property type="match status" value="1"/>
</dbReference>
<dbReference type="Gene3D" id="3.60.150.10">
    <property type="entry name" value="Chorismate synthase AroC"/>
    <property type="match status" value="1"/>
</dbReference>
<dbReference type="HAMAP" id="MF_00300">
    <property type="entry name" value="Chorismate_synth"/>
    <property type="match status" value="1"/>
</dbReference>
<dbReference type="InterPro" id="IPR000453">
    <property type="entry name" value="Chorismate_synth"/>
</dbReference>
<dbReference type="InterPro" id="IPR035904">
    <property type="entry name" value="Chorismate_synth_AroC_sf"/>
</dbReference>
<dbReference type="InterPro" id="IPR020541">
    <property type="entry name" value="Chorismate_synthase_CS"/>
</dbReference>
<dbReference type="NCBIfam" id="TIGR00033">
    <property type="entry name" value="aroC"/>
    <property type="match status" value="1"/>
</dbReference>
<dbReference type="NCBIfam" id="NF003793">
    <property type="entry name" value="PRK05382.1"/>
    <property type="match status" value="1"/>
</dbReference>
<dbReference type="PANTHER" id="PTHR21085">
    <property type="entry name" value="CHORISMATE SYNTHASE"/>
    <property type="match status" value="1"/>
</dbReference>
<dbReference type="PANTHER" id="PTHR21085:SF0">
    <property type="entry name" value="CHORISMATE SYNTHASE"/>
    <property type="match status" value="1"/>
</dbReference>
<dbReference type="Pfam" id="PF01264">
    <property type="entry name" value="Chorismate_synt"/>
    <property type="match status" value="1"/>
</dbReference>
<dbReference type="PIRSF" id="PIRSF001456">
    <property type="entry name" value="Chorismate_synth"/>
    <property type="match status" value="1"/>
</dbReference>
<dbReference type="SUPFAM" id="SSF103263">
    <property type="entry name" value="Chorismate synthase, AroC"/>
    <property type="match status" value="1"/>
</dbReference>
<dbReference type="PROSITE" id="PS00787">
    <property type="entry name" value="CHORISMATE_SYNTHASE_1"/>
    <property type="match status" value="1"/>
</dbReference>
<dbReference type="PROSITE" id="PS00788">
    <property type="entry name" value="CHORISMATE_SYNTHASE_2"/>
    <property type="match status" value="1"/>
</dbReference>
<dbReference type="PROSITE" id="PS00789">
    <property type="entry name" value="CHORISMATE_SYNTHASE_3"/>
    <property type="match status" value="1"/>
</dbReference>
<sequence length="395" mass="41290">MLRWITAGESHGPALVAMLEGMVAGVEVTSEDISTQLARRRLGYGRGARMKFEADKVTIVGGVRHGRTLGGPIAVEVGNTEWPKWETIMSADPVDADLLADQARNAPLTRPRPGHADYSGMLKYGFDDARPVLERASARETAARVAAATFARGFLRQVFGVEVLSHVISIGASDPYAGPEPTASDLAAIDASPVRAFDKAAEESMIAEIEAAKRDGDTLGGIVEVVIHGLPVGLGSFISGADRLDARLASALMGIQAIKGVEVGDGFETARRRGSQAHDEMRPGPDGILRSTNRAGGLEGGMTNGEALRVRAAMKPISTVPRALATVDMSTGEEAVAIHQRSDVCAVPAAGVVAEAMVALVVAQAALEKFGGDSVAETAANYERYASGVAARLAR</sequence>